<feature type="chain" id="PRO_1000140479" description="C4-dicarboxylate transport protein">
    <location>
        <begin position="1"/>
        <end position="429"/>
    </location>
</feature>
<feature type="transmembrane region" description="Helical" evidence="1">
    <location>
        <begin position="3"/>
        <end position="23"/>
    </location>
</feature>
<feature type="transmembrane region" description="Helical" evidence="1">
    <location>
        <begin position="44"/>
        <end position="64"/>
    </location>
</feature>
<feature type="transmembrane region" description="Helical" evidence="1">
    <location>
        <begin position="76"/>
        <end position="96"/>
    </location>
</feature>
<feature type="transmembrane region" description="Helical" evidence="1">
    <location>
        <begin position="144"/>
        <end position="164"/>
    </location>
</feature>
<feature type="transmembrane region" description="Helical" evidence="1">
    <location>
        <begin position="184"/>
        <end position="204"/>
    </location>
</feature>
<feature type="transmembrane region" description="Helical" evidence="1">
    <location>
        <begin position="222"/>
        <end position="242"/>
    </location>
</feature>
<feature type="transmembrane region" description="Helical" evidence="1">
    <location>
        <begin position="331"/>
        <end position="351"/>
    </location>
</feature>
<feature type="transmembrane region" description="Helical" evidence="1">
    <location>
        <begin position="352"/>
        <end position="372"/>
    </location>
</feature>
<keyword id="KW-0997">Cell inner membrane</keyword>
<keyword id="KW-1003">Cell membrane</keyword>
<keyword id="KW-0472">Membrane</keyword>
<keyword id="KW-0769">Symport</keyword>
<keyword id="KW-0812">Transmembrane</keyword>
<keyword id="KW-1133">Transmembrane helix</keyword>
<keyword id="KW-0813">Transport</keyword>
<evidence type="ECO:0000255" key="1">
    <source>
        <dbReference type="HAMAP-Rule" id="MF_01300"/>
    </source>
</evidence>
<gene>
    <name evidence="1" type="primary">dctA</name>
    <name type="ordered locus">YPK_0098</name>
</gene>
<proteinExistence type="inferred from homology"/>
<sequence length="429" mass="45498">MKVSIFKTLYFQVLTAITIGVLLGHFYPEIGAQMKPLGDGFVKLIKMIIAPVIFCTVVTGIAGMESMKAVGRTGAIALLYFEIVSTLALLIGLVVVNVAQPGVGMNIDPATLDAKAVALYAEQASQQGIIPFLLDIIPGSVVGAFASGNILQVLLFAVLFGFALHRLGEKGQLIFNVIESFSRVIFGVINMIMRLAPLGAFGAMAFTIGKYGVGSLVQLGQLILCFYLTCILFVVLVLGTIAKFNGFNIFKFIRYIKEELLIVLGTSSSESVLPRMLDKMENAGCKKSVVGLVIPTGYSFNLDGTSIYLTMAAVFIAQATNTHMDIMHQVTLLVVLLLSSKGAAGVTGSGFIVLAATISAVGHLPLAGLALILGIDRFMSEARALTNLVGNGVATIVVAKWCKQLDNDQLQAVLSNKVLPNVKSSVSVS</sequence>
<comment type="function">
    <text evidence="1">Responsible for the transport of dicarboxylates such as succinate, fumarate, and malate from the periplasm across the membrane.</text>
</comment>
<comment type="subcellular location">
    <subcellularLocation>
        <location evidence="1">Cell inner membrane</location>
        <topology evidence="1">Multi-pass membrane protein</topology>
    </subcellularLocation>
</comment>
<comment type="similarity">
    <text evidence="1">Belongs to the dicarboxylate/amino acid:cation symporter (DAACS) (TC 2.A.23) family.</text>
</comment>
<dbReference type="EMBL" id="CP000950">
    <property type="protein sequence ID" value="ACA66411.1"/>
    <property type="molecule type" value="Genomic_DNA"/>
</dbReference>
<dbReference type="RefSeq" id="WP_002209553.1">
    <property type="nucleotide sequence ID" value="NZ_CP009792.1"/>
</dbReference>
<dbReference type="SMR" id="B1JH81"/>
<dbReference type="KEGG" id="ypy:YPK_0098"/>
<dbReference type="PATRIC" id="fig|502800.11.peg.701"/>
<dbReference type="GO" id="GO:0005886">
    <property type="term" value="C:plasma membrane"/>
    <property type="evidence" value="ECO:0007669"/>
    <property type="project" value="UniProtKB-SubCell"/>
</dbReference>
<dbReference type="GO" id="GO:0015138">
    <property type="term" value="F:fumarate transmembrane transporter activity"/>
    <property type="evidence" value="ECO:0007669"/>
    <property type="project" value="TreeGrafter"/>
</dbReference>
<dbReference type="GO" id="GO:0015366">
    <property type="term" value="F:malate:proton symporter activity"/>
    <property type="evidence" value="ECO:0007669"/>
    <property type="project" value="TreeGrafter"/>
</dbReference>
<dbReference type="GO" id="GO:0015141">
    <property type="term" value="F:succinate transmembrane transporter activity"/>
    <property type="evidence" value="ECO:0007669"/>
    <property type="project" value="TreeGrafter"/>
</dbReference>
<dbReference type="GO" id="GO:0070778">
    <property type="term" value="P:L-aspartate transmembrane transport"/>
    <property type="evidence" value="ECO:0007669"/>
    <property type="project" value="TreeGrafter"/>
</dbReference>
<dbReference type="FunFam" id="1.10.3860.10:FF:000001">
    <property type="entry name" value="C4-dicarboxylate transport protein"/>
    <property type="match status" value="1"/>
</dbReference>
<dbReference type="Gene3D" id="1.10.3860.10">
    <property type="entry name" value="Sodium:dicarboxylate symporter"/>
    <property type="match status" value="1"/>
</dbReference>
<dbReference type="HAMAP" id="MF_01300">
    <property type="entry name" value="C4_dicarb_transport"/>
    <property type="match status" value="1"/>
</dbReference>
<dbReference type="InterPro" id="IPR023954">
    <property type="entry name" value="C4_dicarb_transport"/>
</dbReference>
<dbReference type="InterPro" id="IPR001991">
    <property type="entry name" value="Na-dicarboxylate_symporter"/>
</dbReference>
<dbReference type="InterPro" id="IPR018107">
    <property type="entry name" value="Na-dicarboxylate_symporter_CS"/>
</dbReference>
<dbReference type="InterPro" id="IPR036458">
    <property type="entry name" value="Na:dicarbo_symporter_sf"/>
</dbReference>
<dbReference type="NCBIfam" id="NF002461">
    <property type="entry name" value="PRK01663.1"/>
    <property type="match status" value="1"/>
</dbReference>
<dbReference type="NCBIfam" id="NF009587">
    <property type="entry name" value="PRK13027.1"/>
    <property type="match status" value="1"/>
</dbReference>
<dbReference type="PANTHER" id="PTHR42865:SF1">
    <property type="entry name" value="AEROBIC C4-DICARBOXYLATE TRANSPORT PROTEIN"/>
    <property type="match status" value="1"/>
</dbReference>
<dbReference type="PANTHER" id="PTHR42865">
    <property type="entry name" value="PROTON/GLUTAMATE-ASPARTATE SYMPORTER"/>
    <property type="match status" value="1"/>
</dbReference>
<dbReference type="Pfam" id="PF00375">
    <property type="entry name" value="SDF"/>
    <property type="match status" value="1"/>
</dbReference>
<dbReference type="PRINTS" id="PR00173">
    <property type="entry name" value="EDTRNSPORT"/>
</dbReference>
<dbReference type="SUPFAM" id="SSF118215">
    <property type="entry name" value="Proton glutamate symport protein"/>
    <property type="match status" value="1"/>
</dbReference>
<dbReference type="PROSITE" id="PS00713">
    <property type="entry name" value="NA_DICARBOXYL_SYMP_1"/>
    <property type="match status" value="1"/>
</dbReference>
<dbReference type="PROSITE" id="PS00714">
    <property type="entry name" value="NA_DICARBOXYL_SYMP_2"/>
    <property type="match status" value="1"/>
</dbReference>
<reference key="1">
    <citation type="submission" date="2008-02" db="EMBL/GenBank/DDBJ databases">
        <title>Complete sequence of Yersinia pseudotuberculosis YPIII.</title>
        <authorList>
            <consortium name="US DOE Joint Genome Institute"/>
            <person name="Copeland A."/>
            <person name="Lucas S."/>
            <person name="Lapidus A."/>
            <person name="Glavina del Rio T."/>
            <person name="Dalin E."/>
            <person name="Tice H."/>
            <person name="Bruce D."/>
            <person name="Goodwin L."/>
            <person name="Pitluck S."/>
            <person name="Munk A.C."/>
            <person name="Brettin T."/>
            <person name="Detter J.C."/>
            <person name="Han C."/>
            <person name="Tapia R."/>
            <person name="Schmutz J."/>
            <person name="Larimer F."/>
            <person name="Land M."/>
            <person name="Hauser L."/>
            <person name="Challacombe J.F."/>
            <person name="Green L."/>
            <person name="Lindler L.E."/>
            <person name="Nikolich M.P."/>
            <person name="Richardson P."/>
        </authorList>
    </citation>
    <scope>NUCLEOTIDE SEQUENCE [LARGE SCALE GENOMIC DNA]</scope>
    <source>
        <strain>YPIII</strain>
    </source>
</reference>
<accession>B1JH81</accession>
<organism>
    <name type="scientific">Yersinia pseudotuberculosis serotype O:3 (strain YPIII)</name>
    <dbReference type="NCBI Taxonomy" id="502800"/>
    <lineage>
        <taxon>Bacteria</taxon>
        <taxon>Pseudomonadati</taxon>
        <taxon>Pseudomonadota</taxon>
        <taxon>Gammaproteobacteria</taxon>
        <taxon>Enterobacterales</taxon>
        <taxon>Yersiniaceae</taxon>
        <taxon>Yersinia</taxon>
    </lineage>
</organism>
<name>DCTA_YERPY</name>
<protein>
    <recommendedName>
        <fullName evidence="1">C4-dicarboxylate transport protein</fullName>
    </recommendedName>
</protein>